<organism>
    <name type="scientific">Rattus norvegicus</name>
    <name type="common">Rat</name>
    <dbReference type="NCBI Taxonomy" id="10116"/>
    <lineage>
        <taxon>Eukaryota</taxon>
        <taxon>Metazoa</taxon>
        <taxon>Chordata</taxon>
        <taxon>Craniata</taxon>
        <taxon>Vertebrata</taxon>
        <taxon>Euteleostomi</taxon>
        <taxon>Mammalia</taxon>
        <taxon>Eutheria</taxon>
        <taxon>Euarchontoglires</taxon>
        <taxon>Glires</taxon>
        <taxon>Rodentia</taxon>
        <taxon>Myomorpha</taxon>
        <taxon>Muroidea</taxon>
        <taxon>Muridae</taxon>
        <taxon>Murinae</taxon>
        <taxon>Rattus</taxon>
    </lineage>
</organism>
<gene>
    <name type="primary">Ms4a2</name>
    <name type="synonym">Fce1b</name>
    <name type="synonym">Fcer1b</name>
</gene>
<evidence type="ECO:0000250" key="1"/>
<evidence type="ECO:0000250" key="2">
    <source>
        <dbReference type="UniProtKB" id="P20490"/>
    </source>
</evidence>
<evidence type="ECO:0000255" key="3"/>
<evidence type="ECO:0000256" key="4">
    <source>
        <dbReference type="SAM" id="MobiDB-lite"/>
    </source>
</evidence>
<evidence type="ECO:0000269" key="5">
    <source>
    </source>
</evidence>
<evidence type="ECO:0000305" key="6"/>
<evidence type="ECO:0007829" key="7">
    <source>
        <dbReference type="PDB" id="8Y81"/>
    </source>
</evidence>
<comment type="function">
    <text>High affinity receptor that binds to the Fc region of immunoglobulins epsilon. Aggregation of FCER1 by multivalent antigens is required for the full mast cell response, including the release of preformed mediators (such as histamine) by degranulation and de novo production of lipid mediators and cytokines. Also mediates the secretion of important lymphokines. Binding of allergen to receptor-bound IgE leads to cell activation and the release of mediators responsible for the manifestations of allergy.</text>
</comment>
<comment type="subunit">
    <text evidence="1 5">Tetramer of an alpha chain, a beta chain, and two disulfide linked gamma chains. Binds LILRB1. Interacts with FES/FPS and LYN (By similarity). Interacts with FGR.</text>
</comment>
<comment type="subcellular location">
    <subcellularLocation>
        <location evidence="5">Membrane</location>
        <topology evidence="5">Multi-pass membrane protein</topology>
    </subcellularLocation>
</comment>
<comment type="PTM">
    <text evidence="1">Phosphorylated on tyrosine residues by LYN.</text>
</comment>
<comment type="similarity">
    <text evidence="6">Belongs to the MS4A family.</text>
</comment>
<proteinExistence type="evidence at protein level"/>
<name>FCERB_RAT</name>
<dbReference type="EMBL" id="M22923">
    <property type="protein sequence ID" value="AAA41149.1"/>
    <property type="molecule type" value="mRNA"/>
</dbReference>
<dbReference type="PIR" id="A31231">
    <property type="entry name" value="A31231"/>
</dbReference>
<dbReference type="RefSeq" id="NP_036977.1">
    <property type="nucleotide sequence ID" value="NM_012845.1"/>
</dbReference>
<dbReference type="PDB" id="8Y81">
    <property type="method" value="EM"/>
    <property type="resolution" value="2.89 A"/>
    <property type="chains" value="B=1-243"/>
</dbReference>
<dbReference type="PDB" id="8Y84">
    <property type="method" value="EM"/>
    <property type="resolution" value="2.98 A"/>
    <property type="chains" value="B=1-243"/>
</dbReference>
<dbReference type="PDB" id="8ZGS">
    <property type="method" value="EM"/>
    <property type="resolution" value="3.04 A"/>
    <property type="chains" value="B=1-243"/>
</dbReference>
<dbReference type="PDB" id="8ZGT">
    <property type="method" value="EM"/>
    <property type="resolution" value="2.96 A"/>
    <property type="chains" value="B=1-243"/>
</dbReference>
<dbReference type="PDBsum" id="8Y81"/>
<dbReference type="PDBsum" id="8Y84"/>
<dbReference type="PDBsum" id="8ZGS"/>
<dbReference type="PDBsum" id="8ZGT"/>
<dbReference type="EMDB" id="EMD-39029"/>
<dbReference type="EMDB" id="EMD-39032"/>
<dbReference type="EMDB" id="EMD-60089"/>
<dbReference type="EMDB" id="EMD-60090"/>
<dbReference type="SMR" id="P13386"/>
<dbReference type="BioGRID" id="247355">
    <property type="interactions" value="4"/>
</dbReference>
<dbReference type="FunCoup" id="P13386">
    <property type="interactions" value="21"/>
</dbReference>
<dbReference type="STRING" id="10116.ENSRNOP00000028491"/>
<dbReference type="iPTMnet" id="P13386"/>
<dbReference type="PhosphoSitePlus" id="P13386"/>
<dbReference type="PaxDb" id="10116-ENSRNOP00000028491"/>
<dbReference type="ABCD" id="P13386">
    <property type="antibodies" value="7 sequenced antibodies"/>
</dbReference>
<dbReference type="GeneID" id="25316"/>
<dbReference type="KEGG" id="rno:25316"/>
<dbReference type="UCSC" id="RGD:2598">
    <property type="organism name" value="rat"/>
</dbReference>
<dbReference type="AGR" id="RGD:2598"/>
<dbReference type="CTD" id="2206"/>
<dbReference type="RGD" id="2598">
    <property type="gene designation" value="Ms4a2"/>
</dbReference>
<dbReference type="eggNOG" id="ENOG502TM6F">
    <property type="taxonomic scope" value="Eukaryota"/>
</dbReference>
<dbReference type="HOGENOM" id="CLU_093202_0_0_1"/>
<dbReference type="InParanoid" id="P13386"/>
<dbReference type="PhylomeDB" id="P13386"/>
<dbReference type="TreeFam" id="TF335157"/>
<dbReference type="Reactome" id="R-RNO-2454202">
    <property type="pathway name" value="Fc epsilon receptor (FCERI) signaling"/>
</dbReference>
<dbReference type="Reactome" id="R-RNO-2730905">
    <property type="pathway name" value="Role of LAT2/NTAL/LAB on calcium mobilization"/>
</dbReference>
<dbReference type="Reactome" id="R-RNO-2871796">
    <property type="pathway name" value="FCERI mediated MAPK activation"/>
</dbReference>
<dbReference type="Reactome" id="R-RNO-2871809">
    <property type="pathway name" value="FCERI mediated Ca+2 mobilization"/>
</dbReference>
<dbReference type="Reactome" id="R-RNO-2871837">
    <property type="pathway name" value="FCERI mediated NF-kB activation"/>
</dbReference>
<dbReference type="PRO" id="PR:P13386"/>
<dbReference type="Proteomes" id="UP000002494">
    <property type="component" value="Unplaced"/>
</dbReference>
<dbReference type="GO" id="GO:0005768">
    <property type="term" value="C:endosome"/>
    <property type="evidence" value="ECO:0000314"/>
    <property type="project" value="RGD"/>
</dbReference>
<dbReference type="GO" id="GO:0009897">
    <property type="term" value="C:external side of plasma membrane"/>
    <property type="evidence" value="ECO:0000266"/>
    <property type="project" value="RGD"/>
</dbReference>
<dbReference type="GO" id="GO:0032998">
    <property type="term" value="C:Fc-epsilon receptor I complex"/>
    <property type="evidence" value="ECO:0000266"/>
    <property type="project" value="RGD"/>
</dbReference>
<dbReference type="GO" id="GO:0005886">
    <property type="term" value="C:plasma membrane"/>
    <property type="evidence" value="ECO:0000266"/>
    <property type="project" value="RGD"/>
</dbReference>
<dbReference type="GO" id="GO:0019863">
    <property type="term" value="F:IgE binding"/>
    <property type="evidence" value="ECO:0007669"/>
    <property type="project" value="UniProtKB-KW"/>
</dbReference>
<dbReference type="GO" id="GO:0051219">
    <property type="term" value="F:phosphoprotein binding"/>
    <property type="evidence" value="ECO:0000353"/>
    <property type="project" value="RGD"/>
</dbReference>
<dbReference type="GO" id="GO:0019901">
    <property type="term" value="F:protein kinase binding"/>
    <property type="evidence" value="ECO:0000353"/>
    <property type="project" value="RGD"/>
</dbReference>
<dbReference type="GO" id="GO:0042169">
    <property type="term" value="F:SH2 domain binding"/>
    <property type="evidence" value="ECO:0000314"/>
    <property type="project" value="RGD"/>
</dbReference>
<dbReference type="GO" id="GO:0007166">
    <property type="term" value="P:cell surface receptor signaling pathway"/>
    <property type="evidence" value="ECO:0000266"/>
    <property type="project" value="RGD"/>
</dbReference>
<dbReference type="GO" id="GO:0006955">
    <property type="term" value="P:immune response"/>
    <property type="evidence" value="ECO:0000266"/>
    <property type="project" value="RGD"/>
</dbReference>
<dbReference type="GO" id="GO:0043306">
    <property type="term" value="P:positive regulation of mast cell degranulation"/>
    <property type="evidence" value="ECO:0000315"/>
    <property type="project" value="RGD"/>
</dbReference>
<dbReference type="GO" id="GO:0051279">
    <property type="term" value="P:regulation of release of sequestered calcium ion into cytosol"/>
    <property type="evidence" value="ECO:0000316"/>
    <property type="project" value="RGD"/>
</dbReference>
<dbReference type="GO" id="GO:0007165">
    <property type="term" value="P:signal transduction"/>
    <property type="evidence" value="ECO:0000266"/>
    <property type="project" value="RGD"/>
</dbReference>
<dbReference type="InterPro" id="IPR007237">
    <property type="entry name" value="CD20-like"/>
</dbReference>
<dbReference type="InterPro" id="IPR030417">
    <property type="entry name" value="MS4A"/>
</dbReference>
<dbReference type="PANTHER" id="PTHR23320:SF66">
    <property type="entry name" value="HIGH AFFINITY IMMUNOGLOBULIN EPSILON RECEPTOR SUBUNIT BETA"/>
    <property type="match status" value="1"/>
</dbReference>
<dbReference type="PANTHER" id="PTHR23320">
    <property type="entry name" value="MEMBRANE-SPANNING 4-DOMAINS SUBFAMILY A MS4A -RELATED"/>
    <property type="match status" value="1"/>
</dbReference>
<dbReference type="Pfam" id="PF04103">
    <property type="entry name" value="CD20"/>
    <property type="match status" value="1"/>
</dbReference>
<accession>P13386</accession>
<protein>
    <recommendedName>
        <fullName>High affinity immunoglobulin epsilon receptor subunit beta</fullName>
        <shortName>FcERI</shortName>
    </recommendedName>
    <alternativeName>
        <fullName>Fc epsilon receptor I beta-chain</fullName>
    </alternativeName>
    <alternativeName>
        <fullName>IgE Fc receptor subunit beta</fullName>
    </alternativeName>
    <alternativeName>
        <fullName>Membrane-spanning 4-domains subfamily A member 2</fullName>
    </alternativeName>
</protein>
<reference key="1">
    <citation type="journal article" date="1988" name="Proc. Natl. Acad. Sci. U.S.A.">
        <title>Isolation and characterization of cDNAs coding for the beta subunit of the high-affinity receptor for immunoglobulin E.</title>
        <authorList>
            <person name="Kinet J.-P."/>
            <person name="Blank U."/>
            <person name="Ra C."/>
            <person name="White K."/>
            <person name="Metzger H."/>
            <person name="Kochan J."/>
        </authorList>
    </citation>
    <scope>NUCLEOTIDE SEQUENCE [MRNA]</scope>
    <scope>PROTEIN SEQUENCE OF 11-29; 37-43 AND 217-243</scope>
</reference>
<reference key="2">
    <citation type="journal article" date="2011" name="J. Immunol.">
        <title>The Src family kinase Fgr is critical for activation of mast cells and IgE-mediated anaphylaxis in mice.</title>
        <authorList>
            <person name="Lee J.H."/>
            <person name="Kim J.W."/>
            <person name="Kim do K."/>
            <person name="Kim H.S."/>
            <person name="Park H.J."/>
            <person name="Park D.K."/>
            <person name="Kim A.R."/>
            <person name="Kim B."/>
            <person name="Beaven M.A."/>
            <person name="Park K.L."/>
            <person name="Kim Y.M."/>
            <person name="Choi W.S."/>
        </authorList>
    </citation>
    <scope>INTERACTION WITH FGR</scope>
    <scope>SUBCELLULAR LOCATION</scope>
</reference>
<feature type="chain" id="PRO_0000158631" description="High affinity immunoglobulin epsilon receptor subunit beta">
    <location>
        <begin position="1"/>
        <end position="243"/>
    </location>
</feature>
<feature type="topological domain" description="Cytoplasmic" evidence="3">
    <location>
        <begin position="1"/>
        <end position="59"/>
    </location>
</feature>
<feature type="transmembrane region" description="Helical" evidence="3">
    <location>
        <begin position="60"/>
        <end position="79"/>
    </location>
</feature>
<feature type="topological domain" description="Extracellular" evidence="3">
    <location>
        <begin position="80"/>
        <end position="97"/>
    </location>
</feature>
<feature type="transmembrane region" description="Helical" evidence="3">
    <location>
        <begin position="98"/>
        <end position="117"/>
    </location>
</feature>
<feature type="topological domain" description="Cytoplasmic" evidence="3">
    <location>
        <begin position="118"/>
        <end position="130"/>
    </location>
</feature>
<feature type="transmembrane region" description="Helical" evidence="3">
    <location>
        <begin position="131"/>
        <end position="150"/>
    </location>
</feature>
<feature type="topological domain" description="Extracellular" evidence="3">
    <location>
        <begin position="151"/>
        <end position="179"/>
    </location>
</feature>
<feature type="transmembrane region" description="Helical" evidence="3">
    <location>
        <begin position="180"/>
        <end position="199"/>
    </location>
</feature>
<feature type="topological domain" description="Cytoplasmic" evidence="3">
    <location>
        <begin position="200"/>
        <end position="243"/>
    </location>
</feature>
<feature type="region of interest" description="Disordered" evidence="4">
    <location>
        <begin position="1"/>
        <end position="48"/>
    </location>
</feature>
<feature type="modified residue" description="Phosphotyrosine" evidence="2">
    <location>
        <position position="218"/>
    </location>
</feature>
<feature type="modified residue" description="Phosphotyrosine" evidence="2">
    <location>
        <position position="224"/>
    </location>
</feature>
<feature type="modified residue" description="Phosphoserine" evidence="2">
    <location>
        <position position="225"/>
    </location>
</feature>
<feature type="modified residue" description="Phosphotyrosine" evidence="2">
    <location>
        <position position="228"/>
    </location>
</feature>
<feature type="helix" evidence="7">
    <location>
        <begin position="51"/>
        <end position="55"/>
    </location>
</feature>
<feature type="helix" evidence="7">
    <location>
        <begin position="58"/>
        <end position="82"/>
    </location>
</feature>
<feature type="helix" evidence="7">
    <location>
        <begin position="85"/>
        <end position="87"/>
    </location>
</feature>
<feature type="turn" evidence="7">
    <location>
        <begin position="90"/>
        <end position="93"/>
    </location>
</feature>
<feature type="helix" evidence="7">
    <location>
        <begin position="94"/>
        <end position="97"/>
    </location>
</feature>
<feature type="helix" evidence="7">
    <location>
        <begin position="100"/>
        <end position="121"/>
    </location>
</feature>
<feature type="turn" evidence="7">
    <location>
        <begin position="124"/>
        <end position="129"/>
    </location>
</feature>
<feature type="helix" evidence="7">
    <location>
        <begin position="130"/>
        <end position="159"/>
    </location>
</feature>
<feature type="helix" evidence="7">
    <location>
        <begin position="169"/>
        <end position="204"/>
    </location>
</feature>
<sequence>MDTENKSRADLALPNPQESPSAPDIELLEASPPAKALPEKPASPPPQQTWQSFLKKELEFLGVTQVLVGLICLCFGTVVCSTLQTSDFDDEVLLLYRAGYPFWGAVLFVLSGFLSIMSERKNTLYLVRGSLGANIVSSIAAGLGIAILILNLSNNSAYMNYCKDITEDDGCFVTSFITELVLMLLFLTILAFCSAVLLIIYRIGQEFERSKVPDDRLYEELHVYSPIYSALEDTREASAPVVS</sequence>
<keyword id="KW-0002">3D-structure</keyword>
<keyword id="KW-0903">Direct protein sequencing</keyword>
<keyword id="KW-1015">Disulfide bond</keyword>
<keyword id="KW-0389">IgE-binding protein</keyword>
<keyword id="KW-0472">Membrane</keyword>
<keyword id="KW-0597">Phosphoprotein</keyword>
<keyword id="KW-0675">Receptor</keyword>
<keyword id="KW-1185">Reference proteome</keyword>
<keyword id="KW-0812">Transmembrane</keyword>
<keyword id="KW-1133">Transmembrane helix</keyword>